<organism>
    <name type="scientific">Wickerhamomyces anomalus</name>
    <name type="common">Yeast</name>
    <name type="synonym">Hansenula anomala</name>
    <dbReference type="NCBI Taxonomy" id="4927"/>
    <lineage>
        <taxon>Eukaryota</taxon>
        <taxon>Fungi</taxon>
        <taxon>Dikarya</taxon>
        <taxon>Ascomycota</taxon>
        <taxon>Saccharomycotina</taxon>
        <taxon>Saccharomycetes</taxon>
        <taxon>Phaffomycetales</taxon>
        <taxon>Wickerhamomycetaceae</taxon>
        <taxon>Wickerhamomyces</taxon>
    </lineage>
</organism>
<accession>Q96TW8</accession>
<proteinExistence type="inferred from homology"/>
<comment type="function">
    <text evidence="1">Appears to play a crucial role in the insertion of secretory and membrane polypeptides into the ER. It is required for assembly of membrane and secretory proteins and is essential for cell growth. It interacts with other membrane proteins required for protein translocation. Upon binding to SEC62/63 complex, secretory precursor polypeptides may engage SEC61 to begin membrane penetration event. A cycle of assembly and disassembly of SEC62/63 from SEC61 may govern the activity of the translocase (By similarity).</text>
</comment>
<comment type="subunit">
    <text evidence="1">Heterotrimeric complex composed of SEC61-alpha, SEC61-beta and SEC61-gamma.</text>
</comment>
<comment type="subcellular location">
    <subcellularLocation>
        <location>Endoplasmic reticulum membrane</location>
        <topology>Multi-pass membrane protein</topology>
    </subcellularLocation>
</comment>
<comment type="similarity">
    <text evidence="3">Belongs to the SecY/SEC61-alpha family.</text>
</comment>
<dbReference type="EMBL" id="AJ306295">
    <property type="protein sequence ID" value="CAC69141.1"/>
    <property type="molecule type" value="Genomic_DNA"/>
</dbReference>
<dbReference type="SMR" id="Q96TW8"/>
<dbReference type="GO" id="GO:0000324">
    <property type="term" value="C:fungal-type vacuole"/>
    <property type="evidence" value="ECO:0007669"/>
    <property type="project" value="EnsemblFungi"/>
</dbReference>
<dbReference type="GO" id="GO:0005784">
    <property type="term" value="C:Sec61 translocon complex"/>
    <property type="evidence" value="ECO:0007669"/>
    <property type="project" value="EnsemblFungi"/>
</dbReference>
<dbReference type="GO" id="GO:1904680">
    <property type="term" value="F:peptide transmembrane transporter activity"/>
    <property type="evidence" value="ECO:0007669"/>
    <property type="project" value="EnsemblFungi"/>
</dbReference>
<dbReference type="GO" id="GO:0015450">
    <property type="term" value="F:protein-transporting ATPase activity"/>
    <property type="evidence" value="ECO:0007669"/>
    <property type="project" value="EnsemblFungi"/>
</dbReference>
<dbReference type="GO" id="GO:0005048">
    <property type="term" value="F:signal sequence binding"/>
    <property type="evidence" value="ECO:0007669"/>
    <property type="project" value="EnsemblFungi"/>
</dbReference>
<dbReference type="GO" id="GO:0070843">
    <property type="term" value="P:misfolded protein transport"/>
    <property type="evidence" value="ECO:0007669"/>
    <property type="project" value="EnsemblFungi"/>
</dbReference>
<dbReference type="GO" id="GO:0031204">
    <property type="term" value="P:post-translational protein targeting to membrane, translocation"/>
    <property type="evidence" value="ECO:0007669"/>
    <property type="project" value="EnsemblFungi"/>
</dbReference>
<dbReference type="GO" id="GO:0030970">
    <property type="term" value="P:retrograde protein transport, ER to cytosol"/>
    <property type="evidence" value="ECO:0007669"/>
    <property type="project" value="EnsemblFungi"/>
</dbReference>
<dbReference type="GO" id="GO:0006616">
    <property type="term" value="P:SRP-dependent cotranslational protein targeting to membrane, translocation"/>
    <property type="evidence" value="ECO:0007669"/>
    <property type="project" value="EnsemblFungi"/>
</dbReference>
<dbReference type="FunFam" id="1.10.3370.10:FF:000002">
    <property type="entry name" value="Transport Sec61 subunit alpha isoform 2"/>
    <property type="match status" value="1"/>
</dbReference>
<dbReference type="Gene3D" id="1.10.3370.10">
    <property type="entry name" value="SecY subunit domain"/>
    <property type="match status" value="1"/>
</dbReference>
<dbReference type="InterPro" id="IPR002208">
    <property type="entry name" value="SecY/SEC61-alpha"/>
</dbReference>
<dbReference type="InterPro" id="IPR030659">
    <property type="entry name" value="SecY_CS"/>
</dbReference>
<dbReference type="InterPro" id="IPR023201">
    <property type="entry name" value="SecY_dom_sf"/>
</dbReference>
<dbReference type="InterPro" id="IPR019561">
    <property type="entry name" value="Translocon_Sec61/SecY_plug_dom"/>
</dbReference>
<dbReference type="NCBIfam" id="TIGR00967">
    <property type="entry name" value="3a0501s007"/>
    <property type="match status" value="1"/>
</dbReference>
<dbReference type="NCBIfam" id="NF006341">
    <property type="entry name" value="PRK08568.1-5"/>
    <property type="match status" value="1"/>
</dbReference>
<dbReference type="PANTHER" id="PTHR10906">
    <property type="entry name" value="SECY/SEC61-ALPHA FAMILY MEMBER"/>
    <property type="match status" value="1"/>
</dbReference>
<dbReference type="Pfam" id="PF10559">
    <property type="entry name" value="Plug_translocon"/>
    <property type="match status" value="1"/>
</dbReference>
<dbReference type="Pfam" id="PF00344">
    <property type="entry name" value="SecY"/>
    <property type="match status" value="1"/>
</dbReference>
<dbReference type="PIRSF" id="PIRSF004557">
    <property type="entry name" value="SecY"/>
    <property type="match status" value="1"/>
</dbReference>
<dbReference type="SUPFAM" id="SSF103491">
    <property type="entry name" value="Preprotein translocase SecY subunit"/>
    <property type="match status" value="1"/>
</dbReference>
<dbReference type="PROSITE" id="PS00755">
    <property type="entry name" value="SECY_1"/>
    <property type="match status" value="1"/>
</dbReference>
<dbReference type="PROSITE" id="PS00756">
    <property type="entry name" value="SECY_2"/>
    <property type="match status" value="1"/>
</dbReference>
<feature type="chain" id="PRO_0000131784" description="Protein transport protein SEC61 subunit alpha">
    <location>
        <begin position="1"/>
        <end position="479"/>
    </location>
</feature>
<feature type="topological domain" description="Cytoplasmic" evidence="2">
    <location>
        <begin position="1"/>
        <end position="33"/>
    </location>
</feature>
<feature type="transmembrane region" description="Helical" evidence="2">
    <location>
        <begin position="34"/>
        <end position="54"/>
    </location>
</feature>
<feature type="topological domain" description="Lumenal" evidence="2">
    <location>
        <begin position="55"/>
        <end position="76"/>
    </location>
</feature>
<feature type="transmembrane region" description="Helical" evidence="2">
    <location>
        <begin position="77"/>
        <end position="97"/>
    </location>
</feature>
<feature type="topological domain" description="Cytoplasmic" evidence="2">
    <location>
        <begin position="98"/>
        <end position="119"/>
    </location>
</feature>
<feature type="transmembrane region" description="Helical" evidence="2">
    <location>
        <begin position="120"/>
        <end position="140"/>
    </location>
</feature>
<feature type="topological domain" description="Lumenal" evidence="2">
    <location>
        <begin position="141"/>
        <end position="146"/>
    </location>
</feature>
<feature type="transmembrane region" description="Helical" evidence="2">
    <location>
        <begin position="147"/>
        <end position="167"/>
    </location>
</feature>
<feature type="topological domain" description="Cytoplasmic" evidence="2">
    <location>
        <begin position="168"/>
        <end position="246"/>
    </location>
</feature>
<feature type="transmembrane region" description="Helical" evidence="2">
    <location>
        <begin position="247"/>
        <end position="267"/>
    </location>
</feature>
<feature type="topological domain" description="Lumenal" evidence="2">
    <location>
        <begin position="268"/>
        <end position="361"/>
    </location>
</feature>
<feature type="transmembrane region" description="Helical" evidence="2">
    <location>
        <begin position="362"/>
        <end position="382"/>
    </location>
</feature>
<feature type="topological domain" description="Cytoplasmic" evidence="2">
    <location>
        <begin position="383"/>
        <end position="415"/>
    </location>
</feature>
<feature type="transmembrane region" description="Helical" evidence="2">
    <location>
        <begin position="416"/>
        <end position="434"/>
    </location>
</feature>
<feature type="topological domain" description="Lumenal" evidence="2">
    <location>
        <begin position="435"/>
        <end position="440"/>
    </location>
</feature>
<feature type="transmembrane region" description="Helical" evidence="2">
    <location>
        <begin position="441"/>
        <end position="458"/>
    </location>
</feature>
<feature type="topological domain" description="Cytoplasmic" evidence="2">
    <location>
        <begin position="459"/>
        <end position="479"/>
    </location>
</feature>
<protein>
    <recommendedName>
        <fullName>Protein transport protein SEC61 subunit alpha</fullName>
    </recommendedName>
</protein>
<keyword id="KW-0256">Endoplasmic reticulum</keyword>
<keyword id="KW-0472">Membrane</keyword>
<keyword id="KW-0653">Protein transport</keyword>
<keyword id="KW-0811">Translocation</keyword>
<keyword id="KW-0812">Transmembrane</keyword>
<keyword id="KW-1133">Transmembrane helix</keyword>
<keyword id="KW-0813">Transport</keyword>
<sequence>MSSFRVLDLVKPLTGYLPEVIAPERKVPFNQKLMWTGVTLLIFLVMSEIPLYGIVSSESSDPLFWLRMMLASNRGTLMELGISPIVSSGMVFQLLQGTQLLDVNLESKTDRETFQTAQKLFAILLSIGQATVYVLTGIYGRPSDLGVGVCLLLILQLVFAGIIVILLDELLQKGYGLGSGISLFMATNICEQIFWKAFAPTTVNNGRGDEFEGAVVALFHLLSVRKDKRRALVEAFYRQNLPNIFQLLATFIVFFLVVYLQGFRYEIPVRSTRQRGQNGLYPIKLFYTSNTPIMLQSALTSNFFIISQMLFQRFPLNPVVRLFGVWDARPGSAQLFASNGLAYYIQPPLSLTEALLDPIKTVIYVSFVLSVCALFSKTWIEISGTAPRDVAKQFKDQGLVIAGRRETSVYKELKRIIPTAAAFGGASIGALSVACDLLGTLGSGTSILLAVTTIYSYYEIAAKEGGFQKHIVEGFSEAF</sequence>
<reference key="1">
    <citation type="journal article" date="2001" name="Yeast">
        <title>The sequence of a 15 769 bp segment of Pichia anomala identifies the SEC61 and FBP1 genes and five new open reading frames.</title>
        <authorList>
            <person name="Ruiz T."/>
            <person name="Sanchez M."/>
            <person name="de la Rosa J.M."/>
            <person name="Rodriguez L."/>
            <person name="Dominguez A."/>
        </authorList>
    </citation>
    <scope>NUCLEOTIDE SEQUENCE [GENOMIC DNA]</scope>
    <source>
        <strain>ATCC 36904 / CBS 1982 / NCYC 435 / NRRL Y-2153-4</strain>
    </source>
</reference>
<evidence type="ECO:0000250" key="1"/>
<evidence type="ECO:0000255" key="2"/>
<evidence type="ECO:0000305" key="3"/>
<name>SC61A_WICAO</name>
<gene>
    <name type="primary">SEC61</name>
</gene>